<gene>
    <name evidence="1" type="primary">rpsH</name>
    <name type="ordered locus">TWT_541</name>
</gene>
<reference key="1">
    <citation type="journal article" date="2003" name="Genome Res.">
        <title>Tropheryma whipplei twist: a human pathogenic Actinobacteria with a reduced genome.</title>
        <authorList>
            <person name="Raoult D."/>
            <person name="Ogata H."/>
            <person name="Audic S."/>
            <person name="Robert C."/>
            <person name="Suhre K."/>
            <person name="Drancourt M."/>
            <person name="Claverie J.-M."/>
        </authorList>
    </citation>
    <scope>NUCLEOTIDE SEQUENCE [LARGE SCALE GENOMIC DNA]</scope>
    <source>
        <strain>Twist</strain>
    </source>
</reference>
<protein>
    <recommendedName>
        <fullName evidence="1">Small ribosomal subunit protein uS8</fullName>
    </recommendedName>
    <alternativeName>
        <fullName evidence="2">30S ribosomal protein S8</fullName>
    </alternativeName>
</protein>
<keyword id="KW-1185">Reference proteome</keyword>
<keyword id="KW-0687">Ribonucleoprotein</keyword>
<keyword id="KW-0689">Ribosomal protein</keyword>
<keyword id="KW-0694">RNA-binding</keyword>
<keyword id="KW-0699">rRNA-binding</keyword>
<organism>
    <name type="scientific">Tropheryma whipplei (strain Twist)</name>
    <name type="common">Whipple's bacillus</name>
    <dbReference type="NCBI Taxonomy" id="203267"/>
    <lineage>
        <taxon>Bacteria</taxon>
        <taxon>Bacillati</taxon>
        <taxon>Actinomycetota</taxon>
        <taxon>Actinomycetes</taxon>
        <taxon>Micrococcales</taxon>
        <taxon>Tropherymataceae</taxon>
        <taxon>Tropheryma</taxon>
    </lineage>
</organism>
<proteinExistence type="inferred from homology"/>
<comment type="function">
    <text evidence="1">One of the primary rRNA binding proteins, it binds directly to 16S rRNA central domain where it helps coordinate assembly of the platform of the 30S subunit.</text>
</comment>
<comment type="subunit">
    <text evidence="1">Part of the 30S ribosomal subunit. Contacts proteins S5 and S12.</text>
</comment>
<comment type="similarity">
    <text evidence="1">Belongs to the universal ribosomal protein uS8 family.</text>
</comment>
<name>RS8_TROWT</name>
<sequence>MTMTDPLSDMFSRIRNANQVLHKKVTVPSSRLKVSIADLLKREGYILDYSVIDEHPGQLLVIELKYGPDKSRALVGLKRVSKPGLRVYAKSSNLPEVFGGLGIAILSTSSGLLTCSQARKKGVGGEVLAYAW</sequence>
<evidence type="ECO:0000255" key="1">
    <source>
        <dbReference type="HAMAP-Rule" id="MF_01302"/>
    </source>
</evidence>
<evidence type="ECO:0000305" key="2"/>
<dbReference type="EMBL" id="AE014184">
    <property type="protein sequence ID" value="AAO44638.1"/>
    <property type="molecule type" value="Genomic_DNA"/>
</dbReference>
<dbReference type="RefSeq" id="WP_011096178.1">
    <property type="nucleotide sequence ID" value="NC_004572.3"/>
</dbReference>
<dbReference type="SMR" id="Q83FZ9"/>
<dbReference type="STRING" id="203267.TWT_541"/>
<dbReference type="GeneID" id="67387996"/>
<dbReference type="KEGG" id="twh:TWT_541"/>
<dbReference type="eggNOG" id="COG0096">
    <property type="taxonomic scope" value="Bacteria"/>
</dbReference>
<dbReference type="HOGENOM" id="CLU_098428_0_1_11"/>
<dbReference type="OrthoDB" id="9802617at2"/>
<dbReference type="Proteomes" id="UP000002200">
    <property type="component" value="Chromosome"/>
</dbReference>
<dbReference type="GO" id="GO:1990904">
    <property type="term" value="C:ribonucleoprotein complex"/>
    <property type="evidence" value="ECO:0007669"/>
    <property type="project" value="UniProtKB-KW"/>
</dbReference>
<dbReference type="GO" id="GO:0005840">
    <property type="term" value="C:ribosome"/>
    <property type="evidence" value="ECO:0007669"/>
    <property type="project" value="UniProtKB-KW"/>
</dbReference>
<dbReference type="GO" id="GO:0019843">
    <property type="term" value="F:rRNA binding"/>
    <property type="evidence" value="ECO:0007669"/>
    <property type="project" value="UniProtKB-UniRule"/>
</dbReference>
<dbReference type="GO" id="GO:0003735">
    <property type="term" value="F:structural constituent of ribosome"/>
    <property type="evidence" value="ECO:0007669"/>
    <property type="project" value="InterPro"/>
</dbReference>
<dbReference type="GO" id="GO:0006412">
    <property type="term" value="P:translation"/>
    <property type="evidence" value="ECO:0007669"/>
    <property type="project" value="UniProtKB-UniRule"/>
</dbReference>
<dbReference type="FunFam" id="3.30.1370.30:FF:000002">
    <property type="entry name" value="30S ribosomal protein S8"/>
    <property type="match status" value="1"/>
</dbReference>
<dbReference type="FunFam" id="3.30.1490.10:FF:000001">
    <property type="entry name" value="30S ribosomal protein S8"/>
    <property type="match status" value="1"/>
</dbReference>
<dbReference type="Gene3D" id="3.30.1370.30">
    <property type="match status" value="1"/>
</dbReference>
<dbReference type="Gene3D" id="3.30.1490.10">
    <property type="match status" value="1"/>
</dbReference>
<dbReference type="HAMAP" id="MF_01302_B">
    <property type="entry name" value="Ribosomal_uS8_B"/>
    <property type="match status" value="1"/>
</dbReference>
<dbReference type="InterPro" id="IPR000630">
    <property type="entry name" value="Ribosomal_uS8"/>
</dbReference>
<dbReference type="InterPro" id="IPR047863">
    <property type="entry name" value="Ribosomal_uS8_CS"/>
</dbReference>
<dbReference type="InterPro" id="IPR035987">
    <property type="entry name" value="Ribosomal_uS8_sf"/>
</dbReference>
<dbReference type="NCBIfam" id="NF001109">
    <property type="entry name" value="PRK00136.1"/>
    <property type="match status" value="1"/>
</dbReference>
<dbReference type="PANTHER" id="PTHR11758">
    <property type="entry name" value="40S RIBOSOMAL PROTEIN S15A"/>
    <property type="match status" value="1"/>
</dbReference>
<dbReference type="Pfam" id="PF00410">
    <property type="entry name" value="Ribosomal_S8"/>
    <property type="match status" value="1"/>
</dbReference>
<dbReference type="SUPFAM" id="SSF56047">
    <property type="entry name" value="Ribosomal protein S8"/>
    <property type="match status" value="1"/>
</dbReference>
<dbReference type="PROSITE" id="PS00053">
    <property type="entry name" value="RIBOSOMAL_S8"/>
    <property type="match status" value="1"/>
</dbReference>
<feature type="chain" id="PRO_0000126517" description="Small ribosomal subunit protein uS8">
    <location>
        <begin position="1"/>
        <end position="132"/>
    </location>
</feature>
<accession>Q83FZ9</accession>